<reference key="1">
    <citation type="submission" date="2008-04" db="EMBL/GenBank/DDBJ databases">
        <title>Complete sequence of chromosome 1 of Burkholderia ambifaria MC40-6.</title>
        <authorList>
            <person name="Copeland A."/>
            <person name="Lucas S."/>
            <person name="Lapidus A."/>
            <person name="Glavina del Rio T."/>
            <person name="Dalin E."/>
            <person name="Tice H."/>
            <person name="Pitluck S."/>
            <person name="Chain P."/>
            <person name="Malfatti S."/>
            <person name="Shin M."/>
            <person name="Vergez L."/>
            <person name="Lang D."/>
            <person name="Schmutz J."/>
            <person name="Larimer F."/>
            <person name="Land M."/>
            <person name="Hauser L."/>
            <person name="Kyrpides N."/>
            <person name="Lykidis A."/>
            <person name="Ramette A."/>
            <person name="Konstantinidis K."/>
            <person name="Tiedje J."/>
            <person name="Richardson P."/>
        </authorList>
    </citation>
    <scope>NUCLEOTIDE SEQUENCE [LARGE SCALE GENOMIC DNA]</scope>
    <source>
        <strain>MC40-6</strain>
    </source>
</reference>
<proteinExistence type="inferred from homology"/>
<keyword id="KW-0067">ATP-binding</keyword>
<keyword id="KW-0436">Ligase</keyword>
<keyword id="KW-0547">Nucleotide-binding</keyword>
<keyword id="KW-0648">Protein biosynthesis</keyword>
<protein>
    <recommendedName>
        <fullName evidence="1">Aspartyl/glutamyl-tRNA(Asn/Gln) amidotransferase subunit B</fullName>
        <shortName evidence="1">Asp/Glu-ADT subunit B</shortName>
        <ecNumber evidence="1">6.3.5.-</ecNumber>
    </recommendedName>
</protein>
<sequence length="490" mass="53412">MTQWEVVIGLETHAQLSTVSKIFSGAPTQFGAEPNTQACPVDLALPGVLPVLNRGAVERAIRFGLAIGSTIAPRSIFARKNYFYPDLPKGYQISQYEIPVVQGGQITIQVPANEKAGKPAYEKTVNLTRAHLEEDAGKSLHEDFAGMTGIDLNRAGTPLLEIVTEPEMRSAAEAVAYAKSLHALVVWLGICDGNMQEGSFRCDANVSVRPVGQEKFGTRAEIKNLNSFRFLEEAINYEVRRQIELIEDGGEVVQETRLYDPDKRETRSMRSKEDAHDYRYFPDPDLMPLVIGQDWIERVQAGMPELPAAMQQRFVEQYGVSAYDAGVLTSSKAMAAYFEAVVAKAGAANAKIAANWLMGDVSSQLNRDGIEIDAIPVSAAQLALVLQRIADGTISNKIAKEIFSAIWDEKATDEAAADRIIDAKGLKQISDTGALEAIIDEVLAANAKSVEEFRAGKEKAFNALIGQAMKATKGKANPQQVNELLKKKLG</sequence>
<organism>
    <name type="scientific">Burkholderia ambifaria (strain MC40-6)</name>
    <dbReference type="NCBI Taxonomy" id="398577"/>
    <lineage>
        <taxon>Bacteria</taxon>
        <taxon>Pseudomonadati</taxon>
        <taxon>Pseudomonadota</taxon>
        <taxon>Betaproteobacteria</taxon>
        <taxon>Burkholderiales</taxon>
        <taxon>Burkholderiaceae</taxon>
        <taxon>Burkholderia</taxon>
        <taxon>Burkholderia cepacia complex</taxon>
    </lineage>
</organism>
<gene>
    <name evidence="1" type="primary">gatB</name>
    <name type="ordered locus">BamMC406_3045</name>
</gene>
<accession>B1YPV7</accession>
<feature type="chain" id="PRO_1000095190" description="Aspartyl/glutamyl-tRNA(Asn/Gln) amidotransferase subunit B">
    <location>
        <begin position="1"/>
        <end position="490"/>
    </location>
</feature>
<name>GATB_BURA4</name>
<comment type="function">
    <text evidence="1">Allows the formation of correctly charged Asn-tRNA(Asn) or Gln-tRNA(Gln) through the transamidation of misacylated Asp-tRNA(Asn) or Glu-tRNA(Gln) in organisms which lack either or both of asparaginyl-tRNA or glutaminyl-tRNA synthetases. The reaction takes place in the presence of glutamine and ATP through an activated phospho-Asp-tRNA(Asn) or phospho-Glu-tRNA(Gln).</text>
</comment>
<comment type="catalytic activity">
    <reaction evidence="1">
        <text>L-glutamyl-tRNA(Gln) + L-glutamine + ATP + H2O = L-glutaminyl-tRNA(Gln) + L-glutamate + ADP + phosphate + H(+)</text>
        <dbReference type="Rhea" id="RHEA:17521"/>
        <dbReference type="Rhea" id="RHEA-COMP:9681"/>
        <dbReference type="Rhea" id="RHEA-COMP:9684"/>
        <dbReference type="ChEBI" id="CHEBI:15377"/>
        <dbReference type="ChEBI" id="CHEBI:15378"/>
        <dbReference type="ChEBI" id="CHEBI:29985"/>
        <dbReference type="ChEBI" id="CHEBI:30616"/>
        <dbReference type="ChEBI" id="CHEBI:43474"/>
        <dbReference type="ChEBI" id="CHEBI:58359"/>
        <dbReference type="ChEBI" id="CHEBI:78520"/>
        <dbReference type="ChEBI" id="CHEBI:78521"/>
        <dbReference type="ChEBI" id="CHEBI:456216"/>
    </reaction>
</comment>
<comment type="catalytic activity">
    <reaction evidence="1">
        <text>L-aspartyl-tRNA(Asn) + L-glutamine + ATP + H2O = L-asparaginyl-tRNA(Asn) + L-glutamate + ADP + phosphate + 2 H(+)</text>
        <dbReference type="Rhea" id="RHEA:14513"/>
        <dbReference type="Rhea" id="RHEA-COMP:9674"/>
        <dbReference type="Rhea" id="RHEA-COMP:9677"/>
        <dbReference type="ChEBI" id="CHEBI:15377"/>
        <dbReference type="ChEBI" id="CHEBI:15378"/>
        <dbReference type="ChEBI" id="CHEBI:29985"/>
        <dbReference type="ChEBI" id="CHEBI:30616"/>
        <dbReference type="ChEBI" id="CHEBI:43474"/>
        <dbReference type="ChEBI" id="CHEBI:58359"/>
        <dbReference type="ChEBI" id="CHEBI:78515"/>
        <dbReference type="ChEBI" id="CHEBI:78516"/>
        <dbReference type="ChEBI" id="CHEBI:456216"/>
    </reaction>
</comment>
<comment type="subunit">
    <text evidence="1">Heterotrimer of A, B and C subunits.</text>
</comment>
<comment type="similarity">
    <text evidence="1">Belongs to the GatB/GatE family. GatB subfamily.</text>
</comment>
<evidence type="ECO:0000255" key="1">
    <source>
        <dbReference type="HAMAP-Rule" id="MF_00121"/>
    </source>
</evidence>
<dbReference type="EC" id="6.3.5.-" evidence="1"/>
<dbReference type="EMBL" id="CP001025">
    <property type="protein sequence ID" value="ACB65521.1"/>
    <property type="molecule type" value="Genomic_DNA"/>
</dbReference>
<dbReference type="RefSeq" id="WP_012364990.1">
    <property type="nucleotide sequence ID" value="NC_010551.1"/>
</dbReference>
<dbReference type="SMR" id="B1YPV7"/>
<dbReference type="KEGG" id="bac:BamMC406_3045"/>
<dbReference type="HOGENOM" id="CLU_019240_0_0_4"/>
<dbReference type="OrthoDB" id="9804078at2"/>
<dbReference type="Proteomes" id="UP000001680">
    <property type="component" value="Chromosome 1"/>
</dbReference>
<dbReference type="GO" id="GO:0050566">
    <property type="term" value="F:asparaginyl-tRNA synthase (glutamine-hydrolyzing) activity"/>
    <property type="evidence" value="ECO:0007669"/>
    <property type="project" value="RHEA"/>
</dbReference>
<dbReference type="GO" id="GO:0005524">
    <property type="term" value="F:ATP binding"/>
    <property type="evidence" value="ECO:0007669"/>
    <property type="project" value="UniProtKB-KW"/>
</dbReference>
<dbReference type="GO" id="GO:0050567">
    <property type="term" value="F:glutaminyl-tRNA synthase (glutamine-hydrolyzing) activity"/>
    <property type="evidence" value="ECO:0007669"/>
    <property type="project" value="UniProtKB-UniRule"/>
</dbReference>
<dbReference type="GO" id="GO:0070681">
    <property type="term" value="P:glutaminyl-tRNAGln biosynthesis via transamidation"/>
    <property type="evidence" value="ECO:0007669"/>
    <property type="project" value="TreeGrafter"/>
</dbReference>
<dbReference type="GO" id="GO:0006412">
    <property type="term" value="P:translation"/>
    <property type="evidence" value="ECO:0007669"/>
    <property type="project" value="UniProtKB-UniRule"/>
</dbReference>
<dbReference type="FunFam" id="1.10.10.410:FF:000001">
    <property type="entry name" value="Aspartyl/glutamyl-tRNA(Asn/Gln) amidotransferase subunit B"/>
    <property type="match status" value="1"/>
</dbReference>
<dbReference type="FunFam" id="1.10.150.380:FF:000001">
    <property type="entry name" value="Aspartyl/glutamyl-tRNA(Asn/Gln) amidotransferase subunit B"/>
    <property type="match status" value="1"/>
</dbReference>
<dbReference type="Gene3D" id="1.10.10.410">
    <property type="match status" value="1"/>
</dbReference>
<dbReference type="Gene3D" id="1.10.150.380">
    <property type="entry name" value="GatB domain, N-terminal subdomain"/>
    <property type="match status" value="1"/>
</dbReference>
<dbReference type="HAMAP" id="MF_00121">
    <property type="entry name" value="GatB"/>
    <property type="match status" value="1"/>
</dbReference>
<dbReference type="InterPro" id="IPR017959">
    <property type="entry name" value="Asn/Gln-tRNA_amidoTrfase_suB/E"/>
</dbReference>
<dbReference type="InterPro" id="IPR006075">
    <property type="entry name" value="Asn/Gln-tRNA_Trfase_suB/E_cat"/>
</dbReference>
<dbReference type="InterPro" id="IPR018027">
    <property type="entry name" value="Asn/Gln_amidotransferase"/>
</dbReference>
<dbReference type="InterPro" id="IPR003789">
    <property type="entry name" value="Asn/Gln_tRNA_amidoTrase-B-like"/>
</dbReference>
<dbReference type="InterPro" id="IPR004413">
    <property type="entry name" value="GatB"/>
</dbReference>
<dbReference type="InterPro" id="IPR042114">
    <property type="entry name" value="GatB_C_1"/>
</dbReference>
<dbReference type="InterPro" id="IPR023168">
    <property type="entry name" value="GatB_Yqey_C_2"/>
</dbReference>
<dbReference type="InterPro" id="IPR017958">
    <property type="entry name" value="Gln-tRNA_amidoTrfase_suB_CS"/>
</dbReference>
<dbReference type="InterPro" id="IPR014746">
    <property type="entry name" value="Gln_synth/guanido_kin_cat_dom"/>
</dbReference>
<dbReference type="NCBIfam" id="TIGR00133">
    <property type="entry name" value="gatB"/>
    <property type="match status" value="1"/>
</dbReference>
<dbReference type="NCBIfam" id="NF004012">
    <property type="entry name" value="PRK05477.1-2"/>
    <property type="match status" value="1"/>
</dbReference>
<dbReference type="NCBIfam" id="NF004014">
    <property type="entry name" value="PRK05477.1-4"/>
    <property type="match status" value="1"/>
</dbReference>
<dbReference type="NCBIfam" id="NF004015">
    <property type="entry name" value="PRK05477.1-5"/>
    <property type="match status" value="1"/>
</dbReference>
<dbReference type="PANTHER" id="PTHR11659">
    <property type="entry name" value="GLUTAMYL-TRNA GLN AMIDOTRANSFERASE SUBUNIT B MITOCHONDRIAL AND PROKARYOTIC PET112-RELATED"/>
    <property type="match status" value="1"/>
</dbReference>
<dbReference type="PANTHER" id="PTHR11659:SF0">
    <property type="entry name" value="GLUTAMYL-TRNA(GLN) AMIDOTRANSFERASE SUBUNIT B, MITOCHONDRIAL"/>
    <property type="match status" value="1"/>
</dbReference>
<dbReference type="Pfam" id="PF02934">
    <property type="entry name" value="GatB_N"/>
    <property type="match status" value="1"/>
</dbReference>
<dbReference type="Pfam" id="PF02637">
    <property type="entry name" value="GatB_Yqey"/>
    <property type="match status" value="1"/>
</dbReference>
<dbReference type="SMART" id="SM00845">
    <property type="entry name" value="GatB_Yqey"/>
    <property type="match status" value="1"/>
</dbReference>
<dbReference type="SUPFAM" id="SSF89095">
    <property type="entry name" value="GatB/YqeY motif"/>
    <property type="match status" value="1"/>
</dbReference>
<dbReference type="SUPFAM" id="SSF55931">
    <property type="entry name" value="Glutamine synthetase/guanido kinase"/>
    <property type="match status" value="1"/>
</dbReference>
<dbReference type="PROSITE" id="PS01234">
    <property type="entry name" value="GATB"/>
    <property type="match status" value="1"/>
</dbReference>